<name>Y229_HISS1</name>
<reference key="1">
    <citation type="journal article" date="2007" name="J. Bacteriol.">
        <title>Complete genome sequence of Haemophilus somnus (Histophilus somni) strain 129Pt and comparison to Haemophilus ducreyi 35000HP and Haemophilus influenzae Rd.</title>
        <authorList>
            <person name="Challacombe J.F."/>
            <person name="Duncan A.J."/>
            <person name="Brettin T.S."/>
            <person name="Bruce D."/>
            <person name="Chertkov O."/>
            <person name="Detter J.C."/>
            <person name="Han C.S."/>
            <person name="Misra M."/>
            <person name="Richardson P."/>
            <person name="Tapia R."/>
            <person name="Thayer N."/>
            <person name="Xie G."/>
            <person name="Inzana T.J."/>
        </authorList>
    </citation>
    <scope>NUCLEOTIDE SEQUENCE [LARGE SCALE GENOMIC DNA]</scope>
    <source>
        <strain>129Pt</strain>
    </source>
</reference>
<dbReference type="EMBL" id="CP000436">
    <property type="protein sequence ID" value="ABI24507.1"/>
    <property type="molecule type" value="Genomic_DNA"/>
</dbReference>
<dbReference type="SMR" id="Q0I1R4"/>
<dbReference type="KEGG" id="hso:HS_0229"/>
<dbReference type="eggNOG" id="COG3082">
    <property type="taxonomic scope" value="Bacteria"/>
</dbReference>
<dbReference type="HOGENOM" id="CLU_175457_0_0_6"/>
<dbReference type="Gene3D" id="1.10.3390.10">
    <property type="entry name" value="YejL-like"/>
    <property type="match status" value="1"/>
</dbReference>
<dbReference type="HAMAP" id="MF_00816">
    <property type="entry name" value="UPF0352"/>
    <property type="match status" value="1"/>
</dbReference>
<dbReference type="InterPro" id="IPR009857">
    <property type="entry name" value="UPF0352"/>
</dbReference>
<dbReference type="InterPro" id="IPR023202">
    <property type="entry name" value="YejL_sf"/>
</dbReference>
<dbReference type="NCBIfam" id="NF010242">
    <property type="entry name" value="PRK13689.1"/>
    <property type="match status" value="1"/>
</dbReference>
<dbReference type="Pfam" id="PF07208">
    <property type="entry name" value="DUF1414"/>
    <property type="match status" value="1"/>
</dbReference>
<dbReference type="PIRSF" id="PIRSF006188">
    <property type="entry name" value="UCP006188"/>
    <property type="match status" value="1"/>
</dbReference>
<dbReference type="SUPFAM" id="SSF158651">
    <property type="entry name" value="YejL-like"/>
    <property type="match status" value="1"/>
</dbReference>
<feature type="chain" id="PRO_1000062308" description="UPF0352 protein HS_0229">
    <location>
        <begin position="1"/>
        <end position="73"/>
    </location>
</feature>
<evidence type="ECO:0000255" key="1">
    <source>
        <dbReference type="HAMAP-Rule" id="MF_00816"/>
    </source>
</evidence>
<gene>
    <name type="ordered locus">HS_0229</name>
</gene>
<comment type="similarity">
    <text evidence="1">Belongs to the UPF0352 family.</text>
</comment>
<protein>
    <recommendedName>
        <fullName evidence="1">UPF0352 protein HS_0229</fullName>
    </recommendedName>
</protein>
<organism>
    <name type="scientific">Histophilus somni (strain 129Pt)</name>
    <name type="common">Haemophilus somnus</name>
    <dbReference type="NCBI Taxonomy" id="205914"/>
    <lineage>
        <taxon>Bacteria</taxon>
        <taxon>Pseudomonadati</taxon>
        <taxon>Pseudomonadota</taxon>
        <taxon>Gammaproteobacteria</taxon>
        <taxon>Pasteurellales</taxon>
        <taxon>Pasteurellaceae</taxon>
        <taxon>Histophilus</taxon>
    </lineage>
</organism>
<sequence>MAKISKFQDKQVEAILNDMIAVLEKHQAPVDLSLVVLGNMVTHLLNSSVGSQQRIVLAKVFSDALMNSVKNSK</sequence>
<accession>Q0I1R4</accession>
<proteinExistence type="inferred from homology"/>